<organism>
    <name type="scientific">Bos taurus</name>
    <name type="common">Bovine</name>
    <dbReference type="NCBI Taxonomy" id="9913"/>
    <lineage>
        <taxon>Eukaryota</taxon>
        <taxon>Metazoa</taxon>
        <taxon>Chordata</taxon>
        <taxon>Craniata</taxon>
        <taxon>Vertebrata</taxon>
        <taxon>Euteleostomi</taxon>
        <taxon>Mammalia</taxon>
        <taxon>Eutheria</taxon>
        <taxon>Laurasiatheria</taxon>
        <taxon>Artiodactyla</taxon>
        <taxon>Ruminantia</taxon>
        <taxon>Pecora</taxon>
        <taxon>Bovidae</taxon>
        <taxon>Bovinae</taxon>
        <taxon>Bos</taxon>
    </lineage>
</organism>
<comment type="function">
    <text evidence="1">Thiol-specific peroxidase that catalyzes the reduction of hydrogen peroxide and organic hydroperoxides to water and alcohols, respectively. Plays a role in cell protection against oxidative stress by detoxifying peroxides and as sensor of hydrogen peroxide-mediated signaling events.</text>
</comment>
<comment type="catalytic activity">
    <reaction evidence="1">
        <text>a hydroperoxide + [thioredoxin]-dithiol = an alcohol + [thioredoxin]-disulfide + H2O</text>
        <dbReference type="Rhea" id="RHEA:62620"/>
        <dbReference type="Rhea" id="RHEA-COMP:10698"/>
        <dbReference type="Rhea" id="RHEA-COMP:10700"/>
        <dbReference type="ChEBI" id="CHEBI:15377"/>
        <dbReference type="ChEBI" id="CHEBI:29950"/>
        <dbReference type="ChEBI" id="CHEBI:30879"/>
        <dbReference type="ChEBI" id="CHEBI:35924"/>
        <dbReference type="ChEBI" id="CHEBI:50058"/>
        <dbReference type="EC" id="1.11.1.24"/>
    </reaction>
</comment>
<comment type="subunit">
    <text evidence="1">Monomer.</text>
</comment>
<comment type="subcellular location">
    <molecule>Isoform Mitochondrial</molecule>
    <subcellularLocation>
        <location evidence="1">Mitochondrion</location>
    </subcellularLocation>
</comment>
<comment type="subcellular location">
    <molecule>Isoform Cytoplasmic+peroxisomal</molecule>
    <subcellularLocation>
        <location evidence="1">Cytoplasm</location>
    </subcellularLocation>
    <subcellularLocation>
        <location evidence="1">Peroxisome matrix</location>
    </subcellularLocation>
</comment>
<comment type="alternative products">
    <event type="alternative initiation"/>
    <isoform>
        <id>Q9BGI1-1</id>
        <name>Mitochondrial</name>
        <sequence type="displayed"/>
    </isoform>
    <isoform>
        <id>Q9BGI1-2</id>
        <name>Cytoplasmic+peroxisomal</name>
        <sequence type="described" ref="VSP_018827"/>
    </isoform>
</comment>
<comment type="PTM">
    <text evidence="1">S-palmitoylated. Palmitoylation occurs on the active site, inhibiting its reactivity; therefore PRDX5 palmitoylation status determines its antioxidant capacity.</text>
</comment>
<comment type="PTM">
    <molecule>Isoform Mitochondrial</molecule>
    <text evidence="1">S-palmitoylated. Depalmitoylated by ABHD10.</text>
</comment>
<comment type="miscellaneous">
    <text evidence="1">The active site is a conserved redox-active cysteine residue, the peroxidatic cysteine (C(P)), which makes the nucleophilic attack on the peroxide substrate. The peroxide oxidizes the C(P)-SH to cysteine sulfenic acid (C(P)-SOH), which then reacts with another cysteine residue, the resolving cysteine (C(R)), to form a disulfide bridge. The disulfide is subsequently reduced by an appropriate electron donor to complete the catalytic cycle. In this atypical 2-Cys Prx, C(R) is present in the same subunit to form an intramolecular disulfide. The disulfide is subsequently reduced by thioredoxin.</text>
</comment>
<comment type="similarity">
    <text evidence="6">Belongs to the peroxiredoxin family. Prx5 subfamily.</text>
</comment>
<keyword id="KW-0007">Acetylation</keyword>
<keyword id="KW-0024">Alternative initiation</keyword>
<keyword id="KW-0049">Antioxidant</keyword>
<keyword id="KW-0963">Cytoplasm</keyword>
<keyword id="KW-1015">Disulfide bond</keyword>
<keyword id="KW-0449">Lipoprotein</keyword>
<keyword id="KW-0496">Mitochondrion</keyword>
<keyword id="KW-0560">Oxidoreductase</keyword>
<keyword id="KW-0564">Palmitate</keyword>
<keyword id="KW-0575">Peroxidase</keyword>
<keyword id="KW-0576">Peroxisome</keyword>
<keyword id="KW-0597">Phosphoprotein</keyword>
<keyword id="KW-0676">Redox-active center</keyword>
<keyword id="KW-1185">Reference proteome</keyword>
<keyword id="KW-0809">Transit peptide</keyword>
<gene>
    <name type="primary">PRDX5</name>
</gene>
<name>PRDX5_BOVIN</name>
<dbReference type="EC" id="1.11.1.24" evidence="1"/>
<dbReference type="EMBL" id="AF305564">
    <property type="protein sequence ID" value="AAG53661.1"/>
    <property type="molecule type" value="mRNA"/>
</dbReference>
<dbReference type="EMBL" id="BC103073">
    <property type="protein sequence ID" value="AAI03074.1"/>
    <property type="molecule type" value="mRNA"/>
</dbReference>
<dbReference type="RefSeq" id="NP_777174.1">
    <property type="nucleotide sequence ID" value="NM_174749.2"/>
</dbReference>
<dbReference type="SMR" id="Q9BGI1"/>
<dbReference type="FunCoup" id="Q9BGI1">
    <property type="interactions" value="1502"/>
</dbReference>
<dbReference type="STRING" id="9913.ENSBTAP00000011403"/>
<dbReference type="PeroxiBase" id="4451">
    <property type="entry name" value="BtPrxV"/>
</dbReference>
<dbReference type="PaxDb" id="9913-ENSBTAP00000011403"/>
<dbReference type="PeptideAtlas" id="Q9BGI1"/>
<dbReference type="Ensembl" id="ENSBTAT00000011403.5">
    <molecule id="Q9BGI1-1"/>
    <property type="protein sequence ID" value="ENSBTAP00000011403.3"/>
    <property type="gene ID" value="ENSBTAG00000008648.6"/>
</dbReference>
<dbReference type="GeneID" id="282885"/>
<dbReference type="KEGG" id="bta:282885"/>
<dbReference type="CTD" id="25824"/>
<dbReference type="VEuPathDB" id="HostDB:ENSBTAG00000008648"/>
<dbReference type="eggNOG" id="KOG0541">
    <property type="taxonomic scope" value="Eukaryota"/>
</dbReference>
<dbReference type="GeneTree" id="ENSGT00390000018173"/>
<dbReference type="HOGENOM" id="CLU_072440_3_1_1"/>
<dbReference type="InParanoid" id="Q9BGI1"/>
<dbReference type="OMA" id="SAWGKQH"/>
<dbReference type="OrthoDB" id="1882547at2759"/>
<dbReference type="TreeFam" id="TF105182"/>
<dbReference type="Reactome" id="R-BTA-3299685">
    <property type="pathway name" value="Detoxification of Reactive Oxygen Species"/>
</dbReference>
<dbReference type="Reactome" id="R-BTA-5628897">
    <property type="pathway name" value="TP53 Regulates Metabolic Genes"/>
</dbReference>
<dbReference type="Proteomes" id="UP000009136">
    <property type="component" value="Chromosome 29"/>
</dbReference>
<dbReference type="Bgee" id="ENSBTAG00000008648">
    <property type="expression patterns" value="Expressed in ruminant reticulum and 105 other cell types or tissues"/>
</dbReference>
<dbReference type="GO" id="GO:0005737">
    <property type="term" value="C:cytoplasm"/>
    <property type="evidence" value="ECO:0000318"/>
    <property type="project" value="GO_Central"/>
</dbReference>
<dbReference type="GO" id="GO:0031410">
    <property type="term" value="C:cytoplasmic vesicle"/>
    <property type="evidence" value="ECO:0007669"/>
    <property type="project" value="Ensembl"/>
</dbReference>
<dbReference type="GO" id="GO:0005829">
    <property type="term" value="C:cytosol"/>
    <property type="evidence" value="ECO:0007669"/>
    <property type="project" value="Ensembl"/>
</dbReference>
<dbReference type="GO" id="GO:0005739">
    <property type="term" value="C:mitochondrion"/>
    <property type="evidence" value="ECO:0000318"/>
    <property type="project" value="GO_Central"/>
</dbReference>
<dbReference type="GO" id="GO:0005634">
    <property type="term" value="C:nucleus"/>
    <property type="evidence" value="ECO:0007669"/>
    <property type="project" value="Ensembl"/>
</dbReference>
<dbReference type="GO" id="GO:0048471">
    <property type="term" value="C:perinuclear region of cytoplasm"/>
    <property type="evidence" value="ECO:0007669"/>
    <property type="project" value="Ensembl"/>
</dbReference>
<dbReference type="GO" id="GO:0005782">
    <property type="term" value="C:peroxisomal matrix"/>
    <property type="evidence" value="ECO:0007669"/>
    <property type="project" value="UniProtKB-SubCell"/>
</dbReference>
<dbReference type="GO" id="GO:0005777">
    <property type="term" value="C:peroxisome"/>
    <property type="evidence" value="ECO:0000318"/>
    <property type="project" value="GO_Central"/>
</dbReference>
<dbReference type="GO" id="GO:0043027">
    <property type="term" value="F:cysteine-type endopeptidase inhibitor activity involved in apoptotic process"/>
    <property type="evidence" value="ECO:0007669"/>
    <property type="project" value="Ensembl"/>
</dbReference>
<dbReference type="GO" id="GO:0001016">
    <property type="term" value="F:RNA polymerase III transcription regulatory region sequence-specific DNA binding"/>
    <property type="evidence" value="ECO:0007669"/>
    <property type="project" value="Ensembl"/>
</dbReference>
<dbReference type="GO" id="GO:0008379">
    <property type="term" value="F:thioredoxin peroxidase activity"/>
    <property type="evidence" value="ECO:0000318"/>
    <property type="project" value="GO_Central"/>
</dbReference>
<dbReference type="GO" id="GO:0045454">
    <property type="term" value="P:cell redox homeostasis"/>
    <property type="evidence" value="ECO:0000318"/>
    <property type="project" value="GO_Central"/>
</dbReference>
<dbReference type="GO" id="GO:0034599">
    <property type="term" value="P:cellular response to oxidative stress"/>
    <property type="evidence" value="ECO:0000318"/>
    <property type="project" value="GO_Central"/>
</dbReference>
<dbReference type="GO" id="GO:0034614">
    <property type="term" value="P:cellular response to reactive oxygen species"/>
    <property type="evidence" value="ECO:0007669"/>
    <property type="project" value="Ensembl"/>
</dbReference>
<dbReference type="GO" id="GO:0042744">
    <property type="term" value="P:hydrogen peroxide catabolic process"/>
    <property type="evidence" value="ECO:0000318"/>
    <property type="project" value="GO_Central"/>
</dbReference>
<dbReference type="GO" id="GO:0043066">
    <property type="term" value="P:negative regulation of apoptotic process"/>
    <property type="evidence" value="ECO:0007669"/>
    <property type="project" value="Ensembl"/>
</dbReference>
<dbReference type="GO" id="GO:0016480">
    <property type="term" value="P:negative regulation of transcription by RNA polymerase III"/>
    <property type="evidence" value="ECO:0007669"/>
    <property type="project" value="Ensembl"/>
</dbReference>
<dbReference type="CDD" id="cd03013">
    <property type="entry name" value="PRX5_like"/>
    <property type="match status" value="1"/>
</dbReference>
<dbReference type="FunFam" id="3.40.30.10:FF:000020">
    <property type="entry name" value="Peroxiredoxin"/>
    <property type="match status" value="1"/>
</dbReference>
<dbReference type="Gene3D" id="3.40.30.10">
    <property type="entry name" value="Glutaredoxin"/>
    <property type="match status" value="1"/>
</dbReference>
<dbReference type="InterPro" id="IPR037944">
    <property type="entry name" value="PRX5-like"/>
</dbReference>
<dbReference type="InterPro" id="IPR013740">
    <property type="entry name" value="Redoxin"/>
</dbReference>
<dbReference type="InterPro" id="IPR036249">
    <property type="entry name" value="Thioredoxin-like_sf"/>
</dbReference>
<dbReference type="InterPro" id="IPR013766">
    <property type="entry name" value="Thioredoxin_domain"/>
</dbReference>
<dbReference type="PANTHER" id="PTHR10430">
    <property type="entry name" value="PEROXIREDOXIN"/>
    <property type="match status" value="1"/>
</dbReference>
<dbReference type="PANTHER" id="PTHR10430:SF16">
    <property type="entry name" value="PEROXIREDOXIN-5, MITOCHONDRIAL"/>
    <property type="match status" value="1"/>
</dbReference>
<dbReference type="Pfam" id="PF08534">
    <property type="entry name" value="Redoxin"/>
    <property type="match status" value="1"/>
</dbReference>
<dbReference type="SUPFAM" id="SSF52833">
    <property type="entry name" value="Thioredoxin-like"/>
    <property type="match status" value="1"/>
</dbReference>
<dbReference type="PROSITE" id="PS51352">
    <property type="entry name" value="THIOREDOXIN_2"/>
    <property type="match status" value="1"/>
</dbReference>
<protein>
    <recommendedName>
        <fullName>Peroxiredoxin-5, mitochondrial</fullName>
        <ecNumber evidence="1">1.11.1.24</ecNumber>
    </recommendedName>
    <alternativeName>
        <fullName>Peroxiredoxin V</fullName>
        <shortName>Prx-V</shortName>
    </alternativeName>
    <alternativeName>
        <fullName>Thioredoxin peroxidase</fullName>
    </alternativeName>
    <alternativeName>
        <fullName evidence="6">Thioredoxin-dependent peroxiredoxin 5</fullName>
    </alternativeName>
</protein>
<proteinExistence type="evidence at transcript level"/>
<evidence type="ECO:0000250" key="1">
    <source>
        <dbReference type="UniProtKB" id="P30044"/>
    </source>
</evidence>
<evidence type="ECO:0000250" key="2">
    <source>
        <dbReference type="UniProtKB" id="P99029"/>
    </source>
</evidence>
<evidence type="ECO:0000255" key="3"/>
<evidence type="ECO:0000255" key="4">
    <source>
        <dbReference type="PROSITE-ProRule" id="PRU00691"/>
    </source>
</evidence>
<evidence type="ECO:0000303" key="5">
    <source ref="2"/>
</evidence>
<evidence type="ECO:0000305" key="6"/>
<feature type="transit peptide" description="Mitochondrion" evidence="3">
    <location>
        <begin position="1"/>
        <end position="57"/>
    </location>
</feature>
<feature type="chain" id="PRO_0000023788" description="Peroxiredoxin-5, mitochondrial">
    <location>
        <begin position="58"/>
        <end position="219"/>
    </location>
</feature>
<feature type="domain" description="Thioredoxin" evidence="4">
    <location>
        <begin position="61"/>
        <end position="219"/>
    </location>
</feature>
<feature type="short sequence motif" description="Microbody targeting signal" evidence="1">
    <location>
        <begin position="217"/>
        <end position="219"/>
    </location>
</feature>
<feature type="active site" description="Cysteine sulfenic acid (-SOH) intermediate" evidence="1">
    <location>
        <position position="105"/>
    </location>
</feature>
<feature type="modified residue" description="N6-acetyllysine" evidence="2">
    <location>
        <position position="80"/>
    </location>
</feature>
<feature type="modified residue" description="N6-acetyllysine; alternate" evidence="1">
    <location>
        <position position="88"/>
    </location>
</feature>
<feature type="modified residue" description="N6-succinyllysine; alternate" evidence="2">
    <location>
        <position position="88"/>
    </location>
</feature>
<feature type="modified residue" description="N6-succinyllysine" evidence="2">
    <location>
        <position position="121"/>
    </location>
</feature>
<feature type="modified residue" description="Phosphoserine" evidence="2">
    <location>
        <position position="187"/>
    </location>
</feature>
<feature type="lipid moiety-binding region" description="S-palmitoyl cysteine" evidence="1">
    <location>
        <position position="105"/>
    </location>
</feature>
<feature type="disulfide bond" description="Redox-active" evidence="4">
    <location>
        <begin position="105"/>
        <end position="209"/>
    </location>
</feature>
<feature type="splice variant" id="VSP_018827" description="In isoform Cytoplasmic+peroxisomal." evidence="5">
    <location>
        <begin position="1"/>
        <end position="57"/>
    </location>
</feature>
<feature type="sequence conflict" description="In Ref. 1; AAG53661." evidence="6" ref="1">
    <original>E</original>
    <variation>G</variation>
    <location>
        <position position="76"/>
    </location>
</feature>
<feature type="sequence conflict" description="In Ref. 1; AAG53661." evidence="6" ref="1">
    <original>A</original>
    <variation>T</variation>
    <location>
        <position position="145"/>
    </location>
</feature>
<sequence>MRLGWLRVLGCRPGSVVSRATIVEGASTTAAGTRGCLEGILEWTFGGVRGFRSAAVAMAPIKVGDAIPSVEVFEKEPGNKVNLAELFKGKKGVLFGLPGAFTPGCSKTHLPGFVEQADALKAKGIQVVACLTVNDVFVTEEWARAHKAEGKVRLLADPSGTFGKETDLLLDDSLLFLFGNHRLKRFSMVIEDGIVKSLNVEPDGTGLTCSLAPNILSQL</sequence>
<reference key="1">
    <citation type="submission" date="2000-09" db="EMBL/GenBank/DDBJ databases">
        <title>Cloning of 4 new bovine peroxiredoxins, and screening of the complete peroxiredoxin family in different bovine tissues.</title>
        <authorList>
            <person name="Leyens G."/>
            <person name="Donnay I."/>
            <person name="Knoops B."/>
        </authorList>
    </citation>
    <scope>NUCLEOTIDE SEQUENCE [MRNA]</scope>
    <source>
        <tissue>Liver</tissue>
    </source>
</reference>
<reference key="2">
    <citation type="submission" date="2005-08" db="EMBL/GenBank/DDBJ databases">
        <authorList>
            <consortium name="NIH - Mammalian Gene Collection (MGC) project"/>
        </authorList>
    </citation>
    <scope>NUCLEOTIDE SEQUENCE [LARGE SCALE MRNA] (ISOFORM CYTOPLASMIC+PEROXISOMAL)</scope>
    <source>
        <strain>Crossbred X Angus</strain>
        <tissue>Ileum</tissue>
    </source>
</reference>
<accession>Q9BGI1</accession>
<accession>Q3SZ78</accession>